<dbReference type="EC" id="3.5.99.7" evidence="1"/>
<dbReference type="EMBL" id="CP000545">
    <property type="protein sequence ID" value="ABM98755.1"/>
    <property type="molecule type" value="Genomic_DNA"/>
</dbReference>
<dbReference type="RefSeq" id="WP_004184549.1">
    <property type="nucleotide sequence ID" value="NC_008835.1"/>
</dbReference>
<dbReference type="SMR" id="A2RWH4"/>
<dbReference type="KEGG" id="bml:BMA10229_0218"/>
<dbReference type="HOGENOM" id="CLU_048897_2_1_4"/>
<dbReference type="Proteomes" id="UP000002283">
    <property type="component" value="Chromosome II"/>
</dbReference>
<dbReference type="GO" id="GO:0008660">
    <property type="term" value="F:1-aminocyclopropane-1-carboxylate deaminase activity"/>
    <property type="evidence" value="ECO:0007669"/>
    <property type="project" value="UniProtKB-UniRule"/>
</dbReference>
<dbReference type="GO" id="GO:0019148">
    <property type="term" value="F:D-cysteine desulfhydrase activity"/>
    <property type="evidence" value="ECO:0007669"/>
    <property type="project" value="TreeGrafter"/>
</dbReference>
<dbReference type="GO" id="GO:0030170">
    <property type="term" value="F:pyridoxal phosphate binding"/>
    <property type="evidence" value="ECO:0007669"/>
    <property type="project" value="InterPro"/>
</dbReference>
<dbReference type="GO" id="GO:0018871">
    <property type="term" value="P:1-aminocyclopropane-1-carboxylate metabolic process"/>
    <property type="evidence" value="ECO:0007669"/>
    <property type="project" value="UniProtKB-UniRule"/>
</dbReference>
<dbReference type="GO" id="GO:0009310">
    <property type="term" value="P:amine catabolic process"/>
    <property type="evidence" value="ECO:0007669"/>
    <property type="project" value="InterPro"/>
</dbReference>
<dbReference type="CDD" id="cd06449">
    <property type="entry name" value="ACCD"/>
    <property type="match status" value="1"/>
</dbReference>
<dbReference type="FunFam" id="3.40.50.1100:FF:000053">
    <property type="entry name" value="1-aminocyclopropane-1-carboxylate deaminase"/>
    <property type="match status" value="1"/>
</dbReference>
<dbReference type="Gene3D" id="3.40.50.1100">
    <property type="match status" value="2"/>
</dbReference>
<dbReference type="HAMAP" id="MF_00807">
    <property type="entry name" value="ACC_deaminase"/>
    <property type="match status" value="1"/>
</dbReference>
<dbReference type="InterPro" id="IPR027278">
    <property type="entry name" value="ACCD_DCysDesulf"/>
</dbReference>
<dbReference type="InterPro" id="IPR005965">
    <property type="entry name" value="ACP_carboxylate_deaminase"/>
</dbReference>
<dbReference type="InterPro" id="IPR020601">
    <property type="entry name" value="ACP_carboxylate_deaminase_bac"/>
</dbReference>
<dbReference type="InterPro" id="IPR001926">
    <property type="entry name" value="TrpB-like_PALP"/>
</dbReference>
<dbReference type="InterPro" id="IPR036052">
    <property type="entry name" value="TrpB-like_PALP_sf"/>
</dbReference>
<dbReference type="NCBIfam" id="TIGR01274">
    <property type="entry name" value="ACC_deam"/>
    <property type="match status" value="1"/>
</dbReference>
<dbReference type="PANTHER" id="PTHR43780">
    <property type="entry name" value="1-AMINOCYCLOPROPANE-1-CARBOXYLATE DEAMINASE-RELATED"/>
    <property type="match status" value="1"/>
</dbReference>
<dbReference type="PANTHER" id="PTHR43780:SF2">
    <property type="entry name" value="1-AMINOCYCLOPROPANE-1-CARBOXYLATE DEAMINASE-RELATED"/>
    <property type="match status" value="1"/>
</dbReference>
<dbReference type="Pfam" id="PF00291">
    <property type="entry name" value="PALP"/>
    <property type="match status" value="1"/>
</dbReference>
<dbReference type="PIRSF" id="PIRSF006278">
    <property type="entry name" value="ACCD_DCysDesulf"/>
    <property type="match status" value="1"/>
</dbReference>
<dbReference type="SUPFAM" id="SSF53686">
    <property type="entry name" value="Tryptophan synthase beta subunit-like PLP-dependent enzymes"/>
    <property type="match status" value="1"/>
</dbReference>
<evidence type="ECO:0000255" key="1">
    <source>
        <dbReference type="HAMAP-Rule" id="MF_00807"/>
    </source>
</evidence>
<comment type="function">
    <text evidence="1">Catalyzes a cyclopropane ring-opening reaction, the irreversible conversion of 1-aminocyclopropane-1-carboxylate (ACC) to ammonia and alpha-ketobutyrate. Allows growth on ACC as a nitrogen source.</text>
</comment>
<comment type="catalytic activity">
    <reaction evidence="1">
        <text>1-aminocyclopropane-1-carboxylate + H2O = 2-oxobutanoate + NH4(+)</text>
        <dbReference type="Rhea" id="RHEA:16933"/>
        <dbReference type="ChEBI" id="CHEBI:15377"/>
        <dbReference type="ChEBI" id="CHEBI:16763"/>
        <dbReference type="ChEBI" id="CHEBI:28938"/>
        <dbReference type="ChEBI" id="CHEBI:58360"/>
        <dbReference type="EC" id="3.5.99.7"/>
    </reaction>
</comment>
<comment type="cofactor">
    <cofactor evidence="1">
        <name>pyridoxal 5'-phosphate</name>
        <dbReference type="ChEBI" id="CHEBI:597326"/>
    </cofactor>
</comment>
<comment type="subunit">
    <text evidence="1">Homotrimer.</text>
</comment>
<comment type="similarity">
    <text evidence="1">Belongs to the ACC deaminase/D-cysteine desulfhydrase family.</text>
</comment>
<feature type="chain" id="PRO_1000047088" description="1-aminocyclopropane-1-carboxylate deaminase">
    <location>
        <begin position="1"/>
        <end position="338"/>
    </location>
</feature>
<feature type="active site" description="Nucleophile" evidence="1">
    <location>
        <position position="78"/>
    </location>
</feature>
<feature type="modified residue" description="N6-(pyridoxal phosphate)lysine" evidence="1">
    <location>
        <position position="51"/>
    </location>
</feature>
<reference key="1">
    <citation type="journal article" date="2010" name="Genome Biol. Evol.">
        <title>Continuing evolution of Burkholderia mallei through genome reduction and large-scale rearrangements.</title>
        <authorList>
            <person name="Losada L."/>
            <person name="Ronning C.M."/>
            <person name="DeShazer D."/>
            <person name="Woods D."/>
            <person name="Fedorova N."/>
            <person name="Kim H.S."/>
            <person name="Shabalina S.A."/>
            <person name="Pearson T.R."/>
            <person name="Brinkac L."/>
            <person name="Tan P."/>
            <person name="Nandi T."/>
            <person name="Crabtree J."/>
            <person name="Badger J."/>
            <person name="Beckstrom-Sternberg S."/>
            <person name="Saqib M."/>
            <person name="Schutzer S.E."/>
            <person name="Keim P."/>
            <person name="Nierman W.C."/>
        </authorList>
    </citation>
    <scope>NUCLEOTIDE SEQUENCE [LARGE SCALE GENOMIC DNA]</scope>
    <source>
        <strain>NCTC 10229</strain>
    </source>
</reference>
<gene>
    <name evidence="1" type="primary">acdS</name>
    <name type="ordered locus">BMA10229_0218</name>
</gene>
<protein>
    <recommendedName>
        <fullName evidence="1">1-aminocyclopropane-1-carboxylate deaminase</fullName>
        <shortName evidence="1">ACC deaminase</shortName>
        <shortName evidence="1">ACCD</shortName>
        <ecNumber evidence="1">3.5.99.7</ecNumber>
    </recommendedName>
</protein>
<sequence length="338" mass="36481">MNLQKFSRYPLTFGPTPIQPLKRLSAHLGGKVELYAKRDDCNSGLAFGGNKTRKLEYLIPDALAQGCDTLVSIGGIQSNQTRQVAAVAAHLGMKCVLVQENWVNYHDAVYDRVGNIQMSRMMGADVRLVPDGFDIGFRKSWEDALADVRARGGKPYAIPAGCSDHPLGGLGFVGFAEEVRAQEAELGFQFDYVVVCSVTGSTQAGMVVGFAADGRADRVIGVDASAKPAQTREQILRIAKHTADRVELGRDITSADVVLDERFGGPEYGLPNEGTLEAIRLCAKLEGVLTDPVYEGKSMHGMIEKVRLGEFPAGSKVLYAHLGGVPALNAYSFLFRDG</sequence>
<organism>
    <name type="scientific">Burkholderia mallei (strain NCTC 10229)</name>
    <dbReference type="NCBI Taxonomy" id="412022"/>
    <lineage>
        <taxon>Bacteria</taxon>
        <taxon>Pseudomonadati</taxon>
        <taxon>Pseudomonadota</taxon>
        <taxon>Betaproteobacteria</taxon>
        <taxon>Burkholderiales</taxon>
        <taxon>Burkholderiaceae</taxon>
        <taxon>Burkholderia</taxon>
        <taxon>pseudomallei group</taxon>
    </lineage>
</organism>
<proteinExistence type="inferred from homology"/>
<accession>A2RWH4</accession>
<name>1A1D_BURM9</name>
<keyword id="KW-0378">Hydrolase</keyword>
<keyword id="KW-0663">Pyridoxal phosphate</keyword>